<name>RX1_DANRE</name>
<accession>O42356</accession>
<dbReference type="EMBL" id="AF001907">
    <property type="protein sequence ID" value="AAB62325.2"/>
    <property type="molecule type" value="mRNA"/>
</dbReference>
<dbReference type="SMR" id="O42356"/>
<dbReference type="FunCoup" id="O42356">
    <property type="interactions" value="126"/>
</dbReference>
<dbReference type="STRING" id="7955.ENSDARP00000096944"/>
<dbReference type="PaxDb" id="7955-ENSDARP00000096944"/>
<dbReference type="AGR" id="ZFIN:ZDB-GENE-990415-236"/>
<dbReference type="ZFIN" id="ZDB-GENE-990415-236">
    <property type="gene designation" value="rx1"/>
</dbReference>
<dbReference type="eggNOG" id="KOG0490">
    <property type="taxonomic scope" value="Eukaryota"/>
</dbReference>
<dbReference type="InParanoid" id="O42356"/>
<dbReference type="OrthoDB" id="6159439at2759"/>
<dbReference type="PRO" id="PR:O42356"/>
<dbReference type="Proteomes" id="UP000000437">
    <property type="component" value="Unplaced"/>
</dbReference>
<dbReference type="GO" id="GO:0005634">
    <property type="term" value="C:nucleus"/>
    <property type="evidence" value="ECO:0007669"/>
    <property type="project" value="UniProtKB-SubCell"/>
</dbReference>
<dbReference type="GO" id="GO:0000981">
    <property type="term" value="F:DNA-binding transcription factor activity, RNA polymerase II-specific"/>
    <property type="evidence" value="ECO:0000318"/>
    <property type="project" value="GO_Central"/>
</dbReference>
<dbReference type="GO" id="GO:0000978">
    <property type="term" value="F:RNA polymerase II cis-regulatory region sequence-specific DNA binding"/>
    <property type="evidence" value="ECO:0000318"/>
    <property type="project" value="GO_Central"/>
</dbReference>
<dbReference type="GO" id="GO:0060219">
    <property type="term" value="P:camera-type eye photoreceptor cell differentiation"/>
    <property type="evidence" value="ECO:0000315"/>
    <property type="project" value="ZFIN"/>
</dbReference>
<dbReference type="GO" id="GO:0003407">
    <property type="term" value="P:neural retina development"/>
    <property type="evidence" value="ECO:0000315"/>
    <property type="project" value="ZFIN"/>
</dbReference>
<dbReference type="GO" id="GO:0045944">
    <property type="term" value="P:positive regulation of transcription by RNA polymerase II"/>
    <property type="evidence" value="ECO:0007669"/>
    <property type="project" value="InterPro"/>
</dbReference>
<dbReference type="GO" id="GO:0006357">
    <property type="term" value="P:regulation of transcription by RNA polymerase II"/>
    <property type="evidence" value="ECO:0000318"/>
    <property type="project" value="GO_Central"/>
</dbReference>
<dbReference type="GO" id="GO:0010842">
    <property type="term" value="P:retina layer formation"/>
    <property type="evidence" value="ECO:0000315"/>
    <property type="project" value="ZFIN"/>
</dbReference>
<dbReference type="CDD" id="cd00086">
    <property type="entry name" value="homeodomain"/>
    <property type="match status" value="1"/>
</dbReference>
<dbReference type="FunFam" id="1.10.10.60:FF:000071">
    <property type="entry name" value="Retinal homeobox gene 2"/>
    <property type="match status" value="1"/>
</dbReference>
<dbReference type="Gene3D" id="1.10.10.60">
    <property type="entry name" value="Homeodomain-like"/>
    <property type="match status" value="1"/>
</dbReference>
<dbReference type="InterPro" id="IPR001356">
    <property type="entry name" value="HD"/>
</dbReference>
<dbReference type="InterPro" id="IPR017970">
    <property type="entry name" value="Homeobox_CS"/>
</dbReference>
<dbReference type="InterPro" id="IPR009057">
    <property type="entry name" value="Homeodomain-like_sf"/>
</dbReference>
<dbReference type="InterPro" id="IPR003654">
    <property type="entry name" value="OAR_dom"/>
</dbReference>
<dbReference type="InterPro" id="IPR043562">
    <property type="entry name" value="RAX/RAX2"/>
</dbReference>
<dbReference type="PANTHER" id="PTHR46271">
    <property type="entry name" value="HOMEOBOX PROTEIN, PUTATIVE-RELATED"/>
    <property type="match status" value="1"/>
</dbReference>
<dbReference type="PANTHER" id="PTHR46271:SF2">
    <property type="entry name" value="RETINA AND ANTERIOR NEURAL FOLD HOMEOBOX PROTEIN 2"/>
    <property type="match status" value="1"/>
</dbReference>
<dbReference type="Pfam" id="PF00046">
    <property type="entry name" value="Homeodomain"/>
    <property type="match status" value="1"/>
</dbReference>
<dbReference type="Pfam" id="PF03826">
    <property type="entry name" value="OAR"/>
    <property type="match status" value="1"/>
</dbReference>
<dbReference type="SMART" id="SM00389">
    <property type="entry name" value="HOX"/>
    <property type="match status" value="1"/>
</dbReference>
<dbReference type="SUPFAM" id="SSF46689">
    <property type="entry name" value="Homeodomain-like"/>
    <property type="match status" value="1"/>
</dbReference>
<dbReference type="PROSITE" id="PS00027">
    <property type="entry name" value="HOMEOBOX_1"/>
    <property type="match status" value="1"/>
</dbReference>
<dbReference type="PROSITE" id="PS50071">
    <property type="entry name" value="HOMEOBOX_2"/>
    <property type="match status" value="1"/>
</dbReference>
<dbReference type="PROSITE" id="PS50803">
    <property type="entry name" value="OAR"/>
    <property type="match status" value="1"/>
</dbReference>
<organism>
    <name type="scientific">Danio rerio</name>
    <name type="common">Zebrafish</name>
    <name type="synonym">Brachydanio rerio</name>
    <dbReference type="NCBI Taxonomy" id="7955"/>
    <lineage>
        <taxon>Eukaryota</taxon>
        <taxon>Metazoa</taxon>
        <taxon>Chordata</taxon>
        <taxon>Craniata</taxon>
        <taxon>Vertebrata</taxon>
        <taxon>Euteleostomi</taxon>
        <taxon>Actinopterygii</taxon>
        <taxon>Neopterygii</taxon>
        <taxon>Teleostei</taxon>
        <taxon>Ostariophysi</taxon>
        <taxon>Cypriniformes</taxon>
        <taxon>Danionidae</taxon>
        <taxon>Danioninae</taxon>
        <taxon>Danio</taxon>
    </lineage>
</organism>
<proteinExistence type="evidence at transcript level"/>
<comment type="function">
    <text evidence="1">Plays a critical role in eye formation by regulating the initial specification of retinal cells and/or their subsequent proliferation.</text>
</comment>
<comment type="subcellular location">
    <subcellularLocation>
        <location evidence="3 4">Nucleus</location>
    </subcellularLocation>
</comment>
<comment type="tissue specificity">
    <text>Expressed in the outer nuclear layer, in cone photoreceptor.</text>
</comment>
<comment type="developmental stage">
    <text>Expressed in the optic primordia and in cone photoreceptors of the differentiated neural retina.</text>
</comment>
<comment type="similarity">
    <text evidence="6">Belongs to the paired homeobox family. Bicoid subfamily.</text>
</comment>
<protein>
    <recommendedName>
        <fullName>Retinal homeobox protein Rx1</fullName>
    </recommendedName>
</protein>
<sequence length="330" mass="36936">MHLSLDTMNMVDDSCLSPSNFHDMVKAGGAVVGTRVHSIDVILGFNKDQDSLLNPGDNAVAHKVGGESLGEPGKLDQRVQPYGHLPPLRDGSEQPTFHDADMFSNKCDGDLGDLRKAIESDSKSPDSADGEQPKKKHRRNRTTFTTYQLHELERAFEKSHYPDVYSREELAMKVNLPEVRVQVWFQNRRAKWRRQEKIDASTMKLHDSPMLSFNRPSMHPTVGPMNNSLPLDPWLPSPLSSATPVHSIPGFMGPTQGLQTGYPGHSFLSPPQPMAQSMQPMAPPPYQCPPPFTDKYPLEDVDQRSSSIAALRMKAKEHIQSMDKTWQPMC</sequence>
<feature type="chain" id="PRO_0000049283" description="Retinal homeobox protein Rx1">
    <location>
        <begin position="1"/>
        <end position="330"/>
    </location>
</feature>
<feature type="DNA-binding region" description="Homeobox" evidence="3">
    <location>
        <begin position="137"/>
        <end position="196"/>
    </location>
</feature>
<feature type="region of interest" description="Disordered" evidence="5">
    <location>
        <begin position="66"/>
        <end position="104"/>
    </location>
</feature>
<feature type="region of interest" description="Disordered" evidence="5">
    <location>
        <begin position="118"/>
        <end position="142"/>
    </location>
</feature>
<feature type="short sequence motif" description="Octapeptide motif">
    <location>
        <begin position="37"/>
        <end position="44"/>
    </location>
</feature>
<feature type="short sequence motif" description="OAR" evidence="4">
    <location>
        <begin position="306"/>
        <end position="319"/>
    </location>
</feature>
<feature type="short sequence motif" description="Nuclear localization signal" evidence="2">
    <location>
        <begin position="312"/>
        <end position="316"/>
    </location>
</feature>
<feature type="compositionally biased region" description="Basic and acidic residues" evidence="5">
    <location>
        <begin position="90"/>
        <end position="104"/>
    </location>
</feature>
<reference key="1">
    <citation type="journal article" date="2001" name="Dev. Biol.">
        <title>Zebrafish genes rx1 and rx2 help define the region of forebrain that gives rise to retina.</title>
        <authorList>
            <person name="Chuang J.C."/>
            <person name="Raymond P.A."/>
        </authorList>
    </citation>
    <scope>NUCLEOTIDE SEQUENCE [MRNA]</scope>
</reference>
<reference key="2">
    <citation type="journal article" date="1997" name="Nature">
        <title>The Rx homeobox gene is essential for vertebrate eye development.</title>
        <authorList>
            <person name="Mathers P.H."/>
            <person name="Grinberg A."/>
            <person name="Mahon K.A."/>
            <person name="Jamrich M."/>
        </authorList>
    </citation>
    <scope>NUCLEOTIDE SEQUENCE [MRNA] OF 129-330</scope>
    <source>
        <tissue>Embryo</tissue>
    </source>
</reference>
<keyword id="KW-0217">Developmental protein</keyword>
<keyword id="KW-0238">DNA-binding</keyword>
<keyword id="KW-0371">Homeobox</keyword>
<keyword id="KW-0539">Nucleus</keyword>
<keyword id="KW-1185">Reference proteome</keyword>
<keyword id="KW-0804">Transcription</keyword>
<keyword id="KW-0805">Transcription regulation</keyword>
<gene>
    <name type="primary">rx1</name>
</gene>
<evidence type="ECO:0000250" key="1"/>
<evidence type="ECO:0000255" key="2"/>
<evidence type="ECO:0000255" key="3">
    <source>
        <dbReference type="PROSITE-ProRule" id="PRU00108"/>
    </source>
</evidence>
<evidence type="ECO:0000255" key="4">
    <source>
        <dbReference type="PROSITE-ProRule" id="PRU00138"/>
    </source>
</evidence>
<evidence type="ECO:0000256" key="5">
    <source>
        <dbReference type="SAM" id="MobiDB-lite"/>
    </source>
</evidence>
<evidence type="ECO:0000305" key="6"/>